<evidence type="ECO:0000250" key="1">
    <source>
        <dbReference type="UniProtKB" id="O60303"/>
    </source>
</evidence>
<evidence type="ECO:0000256" key="2">
    <source>
        <dbReference type="SAM" id="MobiDB-lite"/>
    </source>
</evidence>
<organism>
    <name type="scientific">Xenopus laevis</name>
    <name type="common">African clawed frog</name>
    <dbReference type="NCBI Taxonomy" id="8355"/>
    <lineage>
        <taxon>Eukaryota</taxon>
        <taxon>Metazoa</taxon>
        <taxon>Chordata</taxon>
        <taxon>Craniata</taxon>
        <taxon>Vertebrata</taxon>
        <taxon>Euteleostomi</taxon>
        <taxon>Amphibia</taxon>
        <taxon>Batrachia</taxon>
        <taxon>Anura</taxon>
        <taxon>Pipoidea</taxon>
        <taxon>Pipidae</taxon>
        <taxon>Xenopodinae</taxon>
        <taxon>Xenopus</taxon>
        <taxon>Xenopus</taxon>
    </lineage>
</organism>
<keyword id="KW-0966">Cell projection</keyword>
<keyword id="KW-0963">Cytoplasm</keyword>
<keyword id="KW-0206">Cytoskeleton</keyword>
<keyword id="KW-1185">Reference proteome</keyword>
<protein>
    <recommendedName>
        <fullName>Protein KATNIP homolog</fullName>
    </recommendedName>
</protein>
<sequence length="1414" mass="159672">MHGKSLGSSRKNDSRSKIRQEKESNIDFDEKHDEYLINLQQRNRALNNSKAKDATQIKLQHLEEGFSLYLNGANADLRKQQSTQDLARESSKSSKIPDDGCSHLPGRRSQTAPGKIQRKAWVQNSIQIKSERGSRVYIGPNTKYSEDFESDDDMNEDQASDQYKYFTDSEKNVPQGPGKKRLVLDASDVKALRESLEISLCLQQDSKYSLDDDDADFVEEELIECETPELDSPSKTQLESKHQAFGHQRLLPGDFVVLEFNALDKKDGRMLTAKRKDNSEFYIPTKPVMVKNKTPRLKSSSFSSKDSFFPRPESRQEILLPTPRRSISENKDSRPSVSTVVDAINNENEAITRAISDGKTEKMTSGPSGISEGVVTKAIEKINLMKISQQKKLLKVLQDIDNDSSTNSNSEGEILKWDSVYLDPAVKDVICITVEILSNWGNQYYIGLTEIQFFDLKNEEIYVSPHDVDIRNVDVPGDPTCLVNGKTLTTKEHFMWTCPFHPPVQLYFIIRNATKSGDFDISKMKIWNYNKALSDLDIGAKLVKIYKDETLVFDGLLAKGSGNQDFDYSNTIDLHSGQIKSSSFISDQFSDETQISNSLGASNNIELKHQSDGLVYTSEQLSSILSEGSNQAKTSQQKDLHFENNTKGLRTFQDEALNKSFQHLALTSSSINCQEDITEGEVGIKMSYNKEEHFKINQSKDFNTMTAELQMVSATSSKEPPPCPRDDNDLTVTDQLERTPGRKECSSLNRFPPWLSSSSNFQQKSHNQPTKNHLNASSSTFTNKRSDQDINQFLDEYVKSSNTYSNKNFKNCSQSKMLCSSSKMDNEDDLENFSNQSSYNSDRPVSGRRKTVQMQDKSEKYEGASFHKTINPVDTKNLRPRWQNDQENNLLESWTSLIKFNKSHRGRISNLEFEGDIFDEFLQQQQKAGKQSDSTKNGSSLMPKGATEIHLESEKEEGSNFEIPVLPYGQHLCIKIVTTWGDRHYVGLNGIEVFASTGKPVEISRIRADPPDINILPAYGKDPRVVVNLIDGVNRTQDDMHLWLAPFSPGKLHFINLDFVEPCRVAMIRIWNYNKSRIHSFRGVKEVEIFLDNELIFKGEIAKASGTLSGAAEQFGDTILFTTDDEILQAMSLFDETFSEELKATETPTEHEIDSLRPSTADSIKEERPFTQAGLSEKLQSNLTDVSENYSDKLPGIYSGKCLLLNFTMTWGDPHYLGLTGMEIVGRDGKALAITLDALSACPQDLSILPEYKDDLRTLDKLIDGVNITNEDTHMWLIPFASGADHTITINFNKSEDIAGIRFWNYNKSPEDTYRGAKIVYVTLDGHAISPPGGFLIRKGPGNCHFDFAQEILFVDYIHEQQILEKQLRSHSKCMELATMDYEAPLMPCGFIFQLQLITSWGDPYYIGLNGLEM</sequence>
<proteinExistence type="evidence at transcript level"/>
<comment type="function">
    <text evidence="1">May control cilium integrity.</text>
</comment>
<comment type="subcellular location">
    <subcellularLocation>
        <location evidence="1">Cytoplasm</location>
        <location evidence="1">Cytoskeleton</location>
        <location evidence="1">Cilium axoneme</location>
    </subcellularLocation>
    <subcellularLocation>
        <location evidence="1">Cytoplasm</location>
        <location evidence="1">Cytoskeleton</location>
        <location evidence="1">Cilium basal body</location>
    </subcellularLocation>
    <subcellularLocation>
        <location evidence="1">Cytoplasm</location>
        <location evidence="1">Cytoskeleton</location>
    </subcellularLocation>
    <text evidence="1">When overexpressed, localizes to the cytoplasm where it associates with acetylated alpha-tubulin.</text>
</comment>
<name>KATIP_XENLA</name>
<reference key="1">
    <citation type="submission" date="2004-09" db="EMBL/GenBank/DDBJ databases">
        <authorList>
            <consortium name="NIH - Xenopus Gene Collection (XGC) project"/>
        </authorList>
    </citation>
    <scope>NUCLEOTIDE SEQUENCE [LARGE SCALE MRNA]</scope>
    <source>
        <tissue>Embryo</tissue>
    </source>
</reference>
<accession>Q5XK85</accession>
<dbReference type="EMBL" id="BC083029">
    <property type="protein sequence ID" value="AAH83029.1"/>
    <property type="molecule type" value="mRNA"/>
</dbReference>
<dbReference type="RefSeq" id="NP_001088144.1">
    <property type="nucleotide sequence ID" value="NM_001094675.1"/>
</dbReference>
<dbReference type="BioGRID" id="104930">
    <property type="interactions" value="1"/>
</dbReference>
<dbReference type="IntAct" id="Q5XK85">
    <property type="interactions" value="1"/>
</dbReference>
<dbReference type="GeneID" id="494850"/>
<dbReference type="KEGG" id="xla:494850"/>
<dbReference type="AGR" id="Xenbase:XB-GENE-5819675"/>
<dbReference type="CTD" id="494850"/>
<dbReference type="Xenbase" id="XB-GENE-5819675">
    <property type="gene designation" value="katnip.L"/>
</dbReference>
<dbReference type="OrthoDB" id="304622at2759"/>
<dbReference type="Proteomes" id="UP000186698">
    <property type="component" value="Chromosome 9_10L"/>
</dbReference>
<dbReference type="Bgee" id="494850">
    <property type="expression patterns" value="Expressed in egg cell and 16 other cell types or tissues"/>
</dbReference>
<dbReference type="GO" id="GO:0042995">
    <property type="term" value="C:cell projection"/>
    <property type="evidence" value="ECO:0007669"/>
    <property type="project" value="UniProtKB-KW"/>
</dbReference>
<dbReference type="GO" id="GO:0005737">
    <property type="term" value="C:cytoplasm"/>
    <property type="evidence" value="ECO:0007669"/>
    <property type="project" value="UniProtKB-KW"/>
</dbReference>
<dbReference type="GO" id="GO:0005856">
    <property type="term" value="C:cytoskeleton"/>
    <property type="evidence" value="ECO:0007669"/>
    <property type="project" value="UniProtKB-SubCell"/>
</dbReference>
<dbReference type="InterPro" id="IPR026704">
    <property type="entry name" value="KATNIP"/>
</dbReference>
<dbReference type="InterPro" id="IPR027859">
    <property type="entry name" value="KATNIP_dom"/>
</dbReference>
<dbReference type="PANTHER" id="PTHR21534">
    <property type="entry name" value="KATANIN-INTERACTING PROTEIN"/>
    <property type="match status" value="1"/>
</dbReference>
<dbReference type="PANTHER" id="PTHR21534:SF0">
    <property type="entry name" value="KATANIN-INTERACTING PROTEIN"/>
    <property type="match status" value="1"/>
</dbReference>
<dbReference type="Pfam" id="PF14652">
    <property type="entry name" value="DUF4457"/>
    <property type="match status" value="5"/>
</dbReference>
<feature type="chain" id="PRO_0000313092" description="Protein KATNIP homolog">
    <location>
        <begin position="1"/>
        <end position="1414"/>
    </location>
</feature>
<feature type="region of interest" description="Disordered" evidence="2">
    <location>
        <begin position="1"/>
        <end position="32"/>
    </location>
</feature>
<feature type="region of interest" description="Disordered" evidence="2">
    <location>
        <begin position="80"/>
        <end position="116"/>
    </location>
</feature>
<feature type="region of interest" description="Disordered" evidence="2">
    <location>
        <begin position="139"/>
        <end position="158"/>
    </location>
</feature>
<feature type="region of interest" description="Disordered" evidence="2">
    <location>
        <begin position="712"/>
        <end position="731"/>
    </location>
</feature>
<feature type="region of interest" description="Disordered" evidence="2">
    <location>
        <begin position="756"/>
        <end position="783"/>
    </location>
</feature>
<feature type="region of interest" description="Disordered" evidence="2">
    <location>
        <begin position="823"/>
        <end position="861"/>
    </location>
</feature>
<feature type="region of interest" description="Disordered" evidence="2">
    <location>
        <begin position="924"/>
        <end position="943"/>
    </location>
</feature>
<feature type="compositionally biased region" description="Basic and acidic residues" evidence="2">
    <location>
        <begin position="10"/>
        <end position="32"/>
    </location>
</feature>
<feature type="compositionally biased region" description="Basic and acidic residues" evidence="2">
    <location>
        <begin position="86"/>
        <end position="101"/>
    </location>
</feature>
<feature type="compositionally biased region" description="Acidic residues" evidence="2">
    <location>
        <begin position="147"/>
        <end position="158"/>
    </location>
</feature>
<feature type="compositionally biased region" description="Polar residues" evidence="2">
    <location>
        <begin position="832"/>
        <end position="843"/>
    </location>
</feature>
<feature type="compositionally biased region" description="Polar residues" evidence="2">
    <location>
        <begin position="924"/>
        <end position="940"/>
    </location>
</feature>